<keyword id="KW-0256">Endoplasmic reticulum</keyword>
<keyword id="KW-0444">Lipid biosynthesis</keyword>
<keyword id="KW-0443">Lipid metabolism</keyword>
<keyword id="KW-0472">Membrane</keyword>
<keyword id="KW-0489">Methyltransferase</keyword>
<keyword id="KW-0594">Phospholipid biosynthesis</keyword>
<keyword id="KW-1208">Phospholipid metabolism</keyword>
<keyword id="KW-1185">Reference proteome</keyword>
<keyword id="KW-0949">S-adenosyl-L-methionine</keyword>
<keyword id="KW-0808">Transferase</keyword>
<keyword id="KW-0812">Transmembrane</keyword>
<keyword id="KW-1133">Transmembrane helix</keyword>
<evidence type="ECO:0000255" key="1">
    <source>
        <dbReference type="HAMAP-Rule" id="MF_03217"/>
    </source>
</evidence>
<dbReference type="EC" id="2.1.1.17" evidence="1"/>
<dbReference type="EMBL" id="CR382126">
    <property type="protein sequence ID" value="CAG98608.1"/>
    <property type="molecule type" value="Genomic_DNA"/>
</dbReference>
<dbReference type="RefSeq" id="XP_455900.1">
    <property type="nucleotide sequence ID" value="XM_455900.1"/>
</dbReference>
<dbReference type="FunCoup" id="Q6CJI9">
    <property type="interactions" value="92"/>
</dbReference>
<dbReference type="STRING" id="284590.Q6CJI9"/>
<dbReference type="PaxDb" id="284590-Q6CJI9"/>
<dbReference type="KEGG" id="kla:KLLA0_F18282g"/>
<dbReference type="eggNOG" id="ENOG502QRGH">
    <property type="taxonomic scope" value="Eukaryota"/>
</dbReference>
<dbReference type="HOGENOM" id="CLU_005987_0_1_1"/>
<dbReference type="InParanoid" id="Q6CJI9"/>
<dbReference type="OMA" id="RIWYSVG"/>
<dbReference type="UniPathway" id="UPA00753"/>
<dbReference type="Proteomes" id="UP000000598">
    <property type="component" value="Chromosome F"/>
</dbReference>
<dbReference type="GO" id="GO:0005789">
    <property type="term" value="C:endoplasmic reticulum membrane"/>
    <property type="evidence" value="ECO:0007669"/>
    <property type="project" value="UniProtKB-SubCell"/>
</dbReference>
<dbReference type="GO" id="GO:0004608">
    <property type="term" value="F:phosphatidylethanolamine N-methyltransferase activity"/>
    <property type="evidence" value="ECO:0007669"/>
    <property type="project" value="UniProtKB-UniRule"/>
</dbReference>
<dbReference type="GO" id="GO:0032259">
    <property type="term" value="P:methylation"/>
    <property type="evidence" value="ECO:0007669"/>
    <property type="project" value="UniProtKB-KW"/>
</dbReference>
<dbReference type="GO" id="GO:0006656">
    <property type="term" value="P:phosphatidylcholine biosynthetic process"/>
    <property type="evidence" value="ECO:0007669"/>
    <property type="project" value="UniProtKB-UniRule"/>
</dbReference>
<dbReference type="Gene3D" id="1.20.120.1630">
    <property type="match status" value="1"/>
</dbReference>
<dbReference type="Gene3D" id="2.60.40.2840">
    <property type="match status" value="1"/>
</dbReference>
<dbReference type="HAMAP" id="MF_03217">
    <property type="entry name" value="PEMT"/>
    <property type="match status" value="1"/>
</dbReference>
<dbReference type="InterPro" id="IPR007318">
    <property type="entry name" value="Phopholipid_MeTrfase"/>
</dbReference>
<dbReference type="InterPro" id="IPR016219">
    <property type="entry name" value="Phosphatid-EA_MeTrfase_fun"/>
</dbReference>
<dbReference type="PANTHER" id="PTHR32138">
    <property type="entry name" value="PHOSPHATIDYLETHANOLAMINE N-METHYLTRANSFERASE"/>
    <property type="match status" value="1"/>
</dbReference>
<dbReference type="PANTHER" id="PTHR32138:SF0">
    <property type="entry name" value="PHOSPHATIDYLETHANOLAMINE N-METHYLTRANSFERASE"/>
    <property type="match status" value="1"/>
</dbReference>
<dbReference type="Pfam" id="PF04191">
    <property type="entry name" value="PEMT"/>
    <property type="match status" value="2"/>
</dbReference>
<dbReference type="PIRSF" id="PIRSF000383">
    <property type="entry name" value="PEAMT"/>
    <property type="match status" value="1"/>
</dbReference>
<dbReference type="PROSITE" id="PS51598">
    <property type="entry name" value="SAM_CHO2"/>
    <property type="match status" value="1"/>
</dbReference>
<reference key="1">
    <citation type="journal article" date="2004" name="Nature">
        <title>Genome evolution in yeasts.</title>
        <authorList>
            <person name="Dujon B."/>
            <person name="Sherman D."/>
            <person name="Fischer G."/>
            <person name="Durrens P."/>
            <person name="Casaregola S."/>
            <person name="Lafontaine I."/>
            <person name="de Montigny J."/>
            <person name="Marck C."/>
            <person name="Neuveglise C."/>
            <person name="Talla E."/>
            <person name="Goffard N."/>
            <person name="Frangeul L."/>
            <person name="Aigle M."/>
            <person name="Anthouard V."/>
            <person name="Babour A."/>
            <person name="Barbe V."/>
            <person name="Barnay S."/>
            <person name="Blanchin S."/>
            <person name="Beckerich J.-M."/>
            <person name="Beyne E."/>
            <person name="Bleykasten C."/>
            <person name="Boisrame A."/>
            <person name="Boyer J."/>
            <person name="Cattolico L."/>
            <person name="Confanioleri F."/>
            <person name="de Daruvar A."/>
            <person name="Despons L."/>
            <person name="Fabre E."/>
            <person name="Fairhead C."/>
            <person name="Ferry-Dumazet H."/>
            <person name="Groppi A."/>
            <person name="Hantraye F."/>
            <person name="Hennequin C."/>
            <person name="Jauniaux N."/>
            <person name="Joyet P."/>
            <person name="Kachouri R."/>
            <person name="Kerrest A."/>
            <person name="Koszul R."/>
            <person name="Lemaire M."/>
            <person name="Lesur I."/>
            <person name="Ma L."/>
            <person name="Muller H."/>
            <person name="Nicaud J.-M."/>
            <person name="Nikolski M."/>
            <person name="Oztas S."/>
            <person name="Ozier-Kalogeropoulos O."/>
            <person name="Pellenz S."/>
            <person name="Potier S."/>
            <person name="Richard G.-F."/>
            <person name="Straub M.-L."/>
            <person name="Suleau A."/>
            <person name="Swennen D."/>
            <person name="Tekaia F."/>
            <person name="Wesolowski-Louvel M."/>
            <person name="Westhof E."/>
            <person name="Wirth B."/>
            <person name="Zeniou-Meyer M."/>
            <person name="Zivanovic Y."/>
            <person name="Bolotin-Fukuhara M."/>
            <person name="Thierry A."/>
            <person name="Bouchier C."/>
            <person name="Caudron B."/>
            <person name="Scarpelli C."/>
            <person name="Gaillardin C."/>
            <person name="Weissenbach J."/>
            <person name="Wincker P."/>
            <person name="Souciet J.-L."/>
        </authorList>
    </citation>
    <scope>NUCLEOTIDE SEQUENCE [LARGE SCALE GENOMIC DNA]</scope>
    <source>
        <strain>ATCC 8585 / CBS 2359 / DSM 70799 / NBRC 1267 / NRRL Y-1140 / WM37</strain>
    </source>
</reference>
<sequence length="849" mass="98959">MATSCESTVLKPDGKLNSHVKIPIAHPRSSSTIRFDPPKTHDMVRSLFDPTLKKSFLECCITATIIGNVILCYYAYQHLGANTTKIIFLSQYIFWRLSYNLGIGIVLHYQSHYESLTNFAKKHTLFDKKANNLLSRFVKFEISAKYQKGDSLYRYPEEWNTWLLFRQFVDLILMQDFTTYMLYVVISLPHNDILNNITSFNSIGIRVWLGVLMVLFNIWVKIDAHSVVKDYAWYWGDFFFLQDANLVFDGVFNVFPHPMYSIGYIGYYGLSLISGDHHVLFVSILGHCLQFLFLKYVETPHIERIYGSDSSDEEESIDDKMVKQLDNYSKPLVTTFLGFKNFDKFKPTDYITLITVASIVIGCTILNPSFVTLSKIALTTKIVSSVINMTILYKQSNSKWFTSLYLKNGYNEIYAYQMWQFIYNLHSTINYILLVLQCYYHFVKCDSGSYNTITFGLLLLAIQIWCNTEIFHSIKEFGWFYGDFFLPNLIDKRKLKNDGIYRYLNNPERVFGVAGIWGTVLINNFSNWNLWLATTWTMFNWFTVKFIETPHLLKVYGTKPTSSGFEKTLTKYKFGKDFKSLIDKVDQLLDDYLFTSLVPKQSVAEADREGDWESIINMLLIREQTVKNLQGTGHFNLDIVNINDENTIRIPEEIEIKWAVTNEAFHKDDWIGLYKVVETGEDRLTTKIPSQGHWSAVSSSSSYSEDHQKILHFDSNDHFTYGSIKFDKSILCFEEGIYEFRYHSANSHDVVMISKPFKLLFPQFKETVKDVDQLIATTKQFLKQCGVLINDNKFDLNRNKYFTGKTLQNWYKSTMDTDVSVVYMKRTNFDIDIITKKVWQIKQVLDNLE</sequence>
<proteinExistence type="inferred from homology"/>
<feature type="chain" id="PRO_0000405891" description="Phosphatidylethanolamine N-methyltransferase">
    <location>
        <begin position="1"/>
        <end position="849"/>
    </location>
</feature>
<feature type="topological domain" description="Lumenal" evidence="1">
    <location>
        <begin position="1"/>
        <end position="55"/>
    </location>
</feature>
<feature type="transmembrane region" description="Helical" evidence="1">
    <location>
        <begin position="56"/>
        <end position="76"/>
    </location>
</feature>
<feature type="topological domain" description="Cytoplasmic" evidence="1">
    <location>
        <begin position="77"/>
        <end position="85"/>
    </location>
</feature>
<feature type="transmembrane region" description="Helical" evidence="1">
    <location>
        <begin position="86"/>
        <end position="106"/>
    </location>
</feature>
<feature type="topological domain" description="Lumenal" evidence="1">
    <location>
        <begin position="107"/>
        <end position="167"/>
    </location>
</feature>
<feature type="transmembrane region" description="Helical" evidence="1">
    <location>
        <begin position="168"/>
        <end position="188"/>
    </location>
</feature>
<feature type="topological domain" description="Cytoplasmic" evidence="1">
    <location>
        <begin position="189"/>
        <end position="199"/>
    </location>
</feature>
<feature type="transmembrane region" description="Helical" evidence="1">
    <location>
        <begin position="200"/>
        <end position="220"/>
    </location>
</feature>
<feature type="topological domain" description="Lumenal" evidence="1">
    <location>
        <begin position="221"/>
        <end position="231"/>
    </location>
</feature>
<feature type="transmembrane region" description="Helical" evidence="1">
    <location>
        <begin position="232"/>
        <end position="252"/>
    </location>
</feature>
<feature type="topological domain" description="Cytoplasmic" evidence="1">
    <location>
        <begin position="253"/>
        <end position="264"/>
    </location>
</feature>
<feature type="transmembrane region" description="Helical" evidence="1">
    <location>
        <begin position="265"/>
        <end position="285"/>
    </location>
</feature>
<feature type="topological domain" description="Lumenal" evidence="1">
    <location>
        <begin position="286"/>
        <end position="350"/>
    </location>
</feature>
<feature type="transmembrane region" description="Helical" evidence="1">
    <location>
        <begin position="351"/>
        <end position="371"/>
    </location>
</feature>
<feature type="topological domain" description="Cytoplasmic" evidence="1">
    <location>
        <begin position="372"/>
        <end position="375"/>
    </location>
</feature>
<feature type="transmembrane region" description="Helical" evidence="1">
    <location>
        <begin position="376"/>
        <end position="393"/>
    </location>
</feature>
<feature type="topological domain" description="Lumenal" evidence="1">
    <location>
        <begin position="394"/>
        <end position="417"/>
    </location>
</feature>
<feature type="transmembrane region" description="Helical" evidence="1">
    <location>
        <begin position="418"/>
        <end position="438"/>
    </location>
</feature>
<feature type="topological domain" description="Cytoplasmic" evidence="1">
    <location>
        <begin position="439"/>
        <end position="451"/>
    </location>
</feature>
<feature type="transmembrane region" description="Helical" evidence="1">
    <location>
        <begin position="452"/>
        <end position="472"/>
    </location>
</feature>
<feature type="topological domain" description="Lumenal" evidence="1">
    <location>
        <begin position="473"/>
        <end position="509"/>
    </location>
</feature>
<feature type="transmembrane region" description="Helical" evidence="1">
    <location>
        <begin position="510"/>
        <end position="530"/>
    </location>
</feature>
<feature type="topological domain" description="Cytoplasmic" evidence="1">
    <location>
        <begin position="531"/>
        <end position="849"/>
    </location>
</feature>
<name>CHO2_KLULA</name>
<organism>
    <name type="scientific">Kluyveromyces lactis (strain ATCC 8585 / CBS 2359 / DSM 70799 / NBRC 1267 / NRRL Y-1140 / WM37)</name>
    <name type="common">Yeast</name>
    <name type="synonym">Candida sphaerica</name>
    <dbReference type="NCBI Taxonomy" id="284590"/>
    <lineage>
        <taxon>Eukaryota</taxon>
        <taxon>Fungi</taxon>
        <taxon>Dikarya</taxon>
        <taxon>Ascomycota</taxon>
        <taxon>Saccharomycotina</taxon>
        <taxon>Saccharomycetes</taxon>
        <taxon>Saccharomycetales</taxon>
        <taxon>Saccharomycetaceae</taxon>
        <taxon>Kluyveromyces</taxon>
    </lineage>
</organism>
<accession>Q6CJI9</accession>
<protein>
    <recommendedName>
        <fullName evidence="1">Phosphatidylethanolamine N-methyltransferase</fullName>
        <shortName evidence="1">PE methyltransferase</shortName>
        <shortName evidence="1">PEAMT</shortName>
        <shortName evidence="1">PEMT</shortName>
        <ecNumber evidence="1">2.1.1.17</ecNumber>
    </recommendedName>
</protein>
<comment type="function">
    <text evidence="1">Catalyzes the first step of the methylation pathway of phosphatidylcholine biosynthesis, the SAM-dependent methylation of phosphatidylethanolamine (PE) to phosphatidylmonomethylethanolamine (PMME).</text>
</comment>
<comment type="catalytic activity">
    <reaction evidence="1">
        <text>a 1,2-diacyl-sn-glycero-3-phosphoethanolamine + S-adenosyl-L-methionine = a 1,2-diacyl-sn-glycero-3-phospho-N-methylethanolamine + S-adenosyl-L-homocysteine + H(+)</text>
        <dbReference type="Rhea" id="RHEA:11164"/>
        <dbReference type="ChEBI" id="CHEBI:15378"/>
        <dbReference type="ChEBI" id="CHEBI:57856"/>
        <dbReference type="ChEBI" id="CHEBI:59789"/>
        <dbReference type="ChEBI" id="CHEBI:64573"/>
        <dbReference type="ChEBI" id="CHEBI:64612"/>
        <dbReference type="EC" id="2.1.1.17"/>
    </reaction>
</comment>
<comment type="pathway">
    <text evidence="1">Phospholipid metabolism; phosphatidylcholine biosynthesis.</text>
</comment>
<comment type="subcellular location">
    <subcellularLocation>
        <location evidence="1">Endoplasmic reticulum membrane</location>
        <topology evidence="1">Multi-pass membrane protein</topology>
    </subcellularLocation>
</comment>
<comment type="similarity">
    <text evidence="1">Belongs to the class VI-like SAM-binding methyltransferase superfamily. CHO2 family.</text>
</comment>
<gene>
    <name type="primary">CHO2</name>
    <name type="ordered locus">KLLA0F18282g</name>
</gene>